<comment type="catalytic activity">
    <reaction evidence="1">
        <text>tRNA(Arg) + L-arginine + ATP = L-arginyl-tRNA(Arg) + AMP + diphosphate</text>
        <dbReference type="Rhea" id="RHEA:20301"/>
        <dbReference type="Rhea" id="RHEA-COMP:9658"/>
        <dbReference type="Rhea" id="RHEA-COMP:9673"/>
        <dbReference type="ChEBI" id="CHEBI:30616"/>
        <dbReference type="ChEBI" id="CHEBI:32682"/>
        <dbReference type="ChEBI" id="CHEBI:33019"/>
        <dbReference type="ChEBI" id="CHEBI:78442"/>
        <dbReference type="ChEBI" id="CHEBI:78513"/>
        <dbReference type="ChEBI" id="CHEBI:456215"/>
        <dbReference type="EC" id="6.1.1.19"/>
    </reaction>
</comment>
<comment type="subunit">
    <text evidence="1">Monomer.</text>
</comment>
<comment type="subcellular location">
    <subcellularLocation>
        <location evidence="1">Cytoplasm</location>
    </subcellularLocation>
</comment>
<comment type="similarity">
    <text evidence="1">Belongs to the class-I aminoacyl-tRNA synthetase family.</text>
</comment>
<proteinExistence type="inferred from homology"/>
<sequence>MTIKSIISKHIKKVLNIIKIFITHEDLAIVRTSDKKVWDYQVNGIIKLANNLNKNPYVLSKYIISNMRYYEYKMYKKITASKLGFINIFINKTWLEKELTKKIKSFRLGIKKVTPKNIIIDYSSPNVAKKMHVGHLRSTILGDATARILEFLGHNVMRINHIGDWGTHFGMIIAYLKQNFISYNEINQLDLNELYQKAKVNFDLDSEFSKKTRNYVVKLQKKDKECIRIWKKIVKKTITENQKIYKKLNVTLTNKHIVGESFYNDMLPDIIQDLKTKKIAKQCNGAYIVFLNKFKNRDGAPMGVIIQKQDGAFLYSTIDLACLKYRCEVLRADQILYFIDSRQKEYLKQILEIAKKAGYISNNIIIRHNEFGMICSKNKRPFSTRSGNNIILSDLINEAIKRAKKIAKNKNKNLSNKELEYLSEKIGIGAIKYFDLSKNRLTDYIFKWDEILTFDGNTAPYMQYAYIRILSIFKKLNISMLKLSGNIILTELLENKLAIKLFQFEEIILESLQHSAPHIICKYLYELSKIFSKFYEKCSIYKSKNTKIRKNRLLLSLLTARTLKKGLFIIGISTIKYM</sequence>
<accession>P59483</accession>
<evidence type="ECO:0000255" key="1">
    <source>
        <dbReference type="HAMAP-Rule" id="MF_00123"/>
    </source>
</evidence>
<protein>
    <recommendedName>
        <fullName evidence="1">Arginine--tRNA ligase</fullName>
        <ecNumber evidence="1">6.1.1.19</ecNumber>
    </recommendedName>
    <alternativeName>
        <fullName evidence="1">Arginyl-tRNA synthetase</fullName>
        <shortName evidence="1">ArgRS</shortName>
    </alternativeName>
</protein>
<organism>
    <name type="scientific">Buchnera aphidicola subsp. Baizongia pistaciae (strain Bp)</name>
    <dbReference type="NCBI Taxonomy" id="224915"/>
    <lineage>
        <taxon>Bacteria</taxon>
        <taxon>Pseudomonadati</taxon>
        <taxon>Pseudomonadota</taxon>
        <taxon>Gammaproteobacteria</taxon>
        <taxon>Enterobacterales</taxon>
        <taxon>Erwiniaceae</taxon>
        <taxon>Buchnera</taxon>
    </lineage>
</organism>
<gene>
    <name evidence="1" type="primary">argS</name>
    <name type="ordered locus">bbp_224</name>
</gene>
<dbReference type="EC" id="6.1.1.19" evidence="1"/>
<dbReference type="EMBL" id="AE016826">
    <property type="protein sequence ID" value="AAO26955.1"/>
    <property type="molecule type" value="Genomic_DNA"/>
</dbReference>
<dbReference type="RefSeq" id="WP_011091356.1">
    <property type="nucleotide sequence ID" value="NC_004545.1"/>
</dbReference>
<dbReference type="SMR" id="P59483"/>
<dbReference type="STRING" id="224915.bbp_224"/>
<dbReference type="KEGG" id="bab:bbp_224"/>
<dbReference type="eggNOG" id="COG0018">
    <property type="taxonomic scope" value="Bacteria"/>
</dbReference>
<dbReference type="HOGENOM" id="CLU_006406_5_1_6"/>
<dbReference type="OrthoDB" id="9803211at2"/>
<dbReference type="Proteomes" id="UP000000601">
    <property type="component" value="Chromosome"/>
</dbReference>
<dbReference type="GO" id="GO:0005737">
    <property type="term" value="C:cytoplasm"/>
    <property type="evidence" value="ECO:0007669"/>
    <property type="project" value="UniProtKB-SubCell"/>
</dbReference>
<dbReference type="GO" id="GO:0004814">
    <property type="term" value="F:arginine-tRNA ligase activity"/>
    <property type="evidence" value="ECO:0007669"/>
    <property type="project" value="UniProtKB-UniRule"/>
</dbReference>
<dbReference type="GO" id="GO:0005524">
    <property type="term" value="F:ATP binding"/>
    <property type="evidence" value="ECO:0007669"/>
    <property type="project" value="UniProtKB-UniRule"/>
</dbReference>
<dbReference type="GO" id="GO:0006420">
    <property type="term" value="P:arginyl-tRNA aminoacylation"/>
    <property type="evidence" value="ECO:0007669"/>
    <property type="project" value="UniProtKB-UniRule"/>
</dbReference>
<dbReference type="FunFam" id="3.40.50.620:FF:000030">
    <property type="entry name" value="Arginine--tRNA ligase"/>
    <property type="match status" value="1"/>
</dbReference>
<dbReference type="Gene3D" id="3.30.1360.70">
    <property type="entry name" value="Arginyl tRNA synthetase N-terminal domain"/>
    <property type="match status" value="1"/>
</dbReference>
<dbReference type="Gene3D" id="3.40.50.620">
    <property type="entry name" value="HUPs"/>
    <property type="match status" value="1"/>
</dbReference>
<dbReference type="Gene3D" id="1.10.730.10">
    <property type="entry name" value="Isoleucyl-tRNA Synthetase, Domain 1"/>
    <property type="match status" value="1"/>
</dbReference>
<dbReference type="HAMAP" id="MF_00123">
    <property type="entry name" value="Arg_tRNA_synth"/>
    <property type="match status" value="1"/>
</dbReference>
<dbReference type="InterPro" id="IPR001412">
    <property type="entry name" value="aa-tRNA-synth_I_CS"/>
</dbReference>
<dbReference type="InterPro" id="IPR001278">
    <property type="entry name" value="Arg-tRNA-ligase"/>
</dbReference>
<dbReference type="InterPro" id="IPR005148">
    <property type="entry name" value="Arg-tRNA-synth_N"/>
</dbReference>
<dbReference type="InterPro" id="IPR036695">
    <property type="entry name" value="Arg-tRNA-synth_N_sf"/>
</dbReference>
<dbReference type="InterPro" id="IPR035684">
    <property type="entry name" value="ArgRS_core"/>
</dbReference>
<dbReference type="InterPro" id="IPR008909">
    <property type="entry name" value="DALR_anticod-bd"/>
</dbReference>
<dbReference type="InterPro" id="IPR014729">
    <property type="entry name" value="Rossmann-like_a/b/a_fold"/>
</dbReference>
<dbReference type="InterPro" id="IPR009080">
    <property type="entry name" value="tRNAsynth_Ia_anticodon-bd"/>
</dbReference>
<dbReference type="NCBIfam" id="TIGR00456">
    <property type="entry name" value="argS"/>
    <property type="match status" value="1"/>
</dbReference>
<dbReference type="PANTHER" id="PTHR11956:SF5">
    <property type="entry name" value="ARGININE--TRNA LIGASE, CYTOPLASMIC"/>
    <property type="match status" value="1"/>
</dbReference>
<dbReference type="PANTHER" id="PTHR11956">
    <property type="entry name" value="ARGINYL-TRNA SYNTHETASE"/>
    <property type="match status" value="1"/>
</dbReference>
<dbReference type="Pfam" id="PF03485">
    <property type="entry name" value="Arg_tRNA_synt_N"/>
    <property type="match status" value="1"/>
</dbReference>
<dbReference type="Pfam" id="PF05746">
    <property type="entry name" value="DALR_1"/>
    <property type="match status" value="1"/>
</dbReference>
<dbReference type="Pfam" id="PF00750">
    <property type="entry name" value="tRNA-synt_1d"/>
    <property type="match status" value="1"/>
</dbReference>
<dbReference type="PRINTS" id="PR01038">
    <property type="entry name" value="TRNASYNTHARG"/>
</dbReference>
<dbReference type="SMART" id="SM01016">
    <property type="entry name" value="Arg_tRNA_synt_N"/>
    <property type="match status" value="1"/>
</dbReference>
<dbReference type="SMART" id="SM00836">
    <property type="entry name" value="DALR_1"/>
    <property type="match status" value="1"/>
</dbReference>
<dbReference type="SUPFAM" id="SSF47323">
    <property type="entry name" value="Anticodon-binding domain of a subclass of class I aminoacyl-tRNA synthetases"/>
    <property type="match status" value="1"/>
</dbReference>
<dbReference type="SUPFAM" id="SSF55190">
    <property type="entry name" value="Arginyl-tRNA synthetase (ArgRS), N-terminal 'additional' domain"/>
    <property type="match status" value="1"/>
</dbReference>
<dbReference type="SUPFAM" id="SSF52374">
    <property type="entry name" value="Nucleotidylyl transferase"/>
    <property type="match status" value="1"/>
</dbReference>
<dbReference type="PROSITE" id="PS00178">
    <property type="entry name" value="AA_TRNA_LIGASE_I"/>
    <property type="match status" value="1"/>
</dbReference>
<name>SYR_BUCBP</name>
<feature type="chain" id="PRO_0000151541" description="Arginine--tRNA ligase">
    <location>
        <begin position="1"/>
        <end position="578"/>
    </location>
</feature>
<feature type="short sequence motif" description="'HIGH' region">
    <location>
        <begin position="125"/>
        <end position="135"/>
    </location>
</feature>
<keyword id="KW-0030">Aminoacyl-tRNA synthetase</keyword>
<keyword id="KW-0067">ATP-binding</keyword>
<keyword id="KW-0963">Cytoplasm</keyword>
<keyword id="KW-0436">Ligase</keyword>
<keyword id="KW-0547">Nucleotide-binding</keyword>
<keyword id="KW-0648">Protein biosynthesis</keyword>
<keyword id="KW-1185">Reference proteome</keyword>
<reference key="1">
    <citation type="journal article" date="2003" name="Proc. Natl. Acad. Sci. U.S.A.">
        <title>Reductive genome evolution in Buchnera aphidicola.</title>
        <authorList>
            <person name="van Ham R.C.H.J."/>
            <person name="Kamerbeek J."/>
            <person name="Palacios C."/>
            <person name="Rausell C."/>
            <person name="Abascal F."/>
            <person name="Bastolla U."/>
            <person name="Fernandez J.M."/>
            <person name="Jimenez L."/>
            <person name="Postigo M."/>
            <person name="Silva F.J."/>
            <person name="Tamames J."/>
            <person name="Viguera E."/>
            <person name="Latorre A."/>
            <person name="Valencia A."/>
            <person name="Moran F."/>
            <person name="Moya A."/>
        </authorList>
    </citation>
    <scope>NUCLEOTIDE SEQUENCE [LARGE SCALE GENOMIC DNA]</scope>
    <source>
        <strain>Bp</strain>
    </source>
</reference>